<accession>A3NYA9</accession>
<sequence>MDWILICKALALGIVEGLTEFLPVSSTGHLIVAGSFLRFHPEQAKTFDVVIQFGAILAVCWEYRRRIIDVVTGLPAQREARRFTMNVVIATVPAVALALLFEKTIKSVLFAPVPVAVALVVGGAAILWVEGRQRERSEPARVQSIDALTPFDALKVGLAQCCALIPGMSRSGSTIIGGMLFGLERRVATEFSFFLAIPVIFGATLYETAKDWRAFNVDSVGLFAIGLVAAFVSAFACVRWLLRYVASHDFTAFAWYRIAFGLFVLLVGYSGWIEWT</sequence>
<name>UPPP2_BURP0</name>
<feature type="chain" id="PRO_0000303024" description="Undecaprenyl-diphosphatase 2">
    <location>
        <begin position="1"/>
        <end position="276"/>
    </location>
</feature>
<feature type="transmembrane region" description="Helical" evidence="1">
    <location>
        <begin position="85"/>
        <end position="105"/>
    </location>
</feature>
<feature type="transmembrane region" description="Helical" evidence="1">
    <location>
        <begin position="108"/>
        <end position="128"/>
    </location>
</feature>
<feature type="transmembrane region" description="Helical" evidence="1">
    <location>
        <begin position="187"/>
        <end position="207"/>
    </location>
</feature>
<feature type="transmembrane region" description="Helical" evidence="1">
    <location>
        <begin position="217"/>
        <end position="237"/>
    </location>
</feature>
<feature type="transmembrane region" description="Helical" evidence="1">
    <location>
        <begin position="253"/>
        <end position="273"/>
    </location>
</feature>
<comment type="function">
    <text evidence="1">Catalyzes the dephosphorylation of undecaprenyl diphosphate (UPP). Confers resistance to bacitracin.</text>
</comment>
<comment type="catalytic activity">
    <reaction evidence="1">
        <text>di-trans,octa-cis-undecaprenyl diphosphate + H2O = di-trans,octa-cis-undecaprenyl phosphate + phosphate + H(+)</text>
        <dbReference type="Rhea" id="RHEA:28094"/>
        <dbReference type="ChEBI" id="CHEBI:15377"/>
        <dbReference type="ChEBI" id="CHEBI:15378"/>
        <dbReference type="ChEBI" id="CHEBI:43474"/>
        <dbReference type="ChEBI" id="CHEBI:58405"/>
        <dbReference type="ChEBI" id="CHEBI:60392"/>
        <dbReference type="EC" id="3.6.1.27"/>
    </reaction>
</comment>
<comment type="subcellular location">
    <subcellularLocation>
        <location evidence="1">Cell inner membrane</location>
        <topology evidence="1">Multi-pass membrane protein</topology>
    </subcellularLocation>
</comment>
<comment type="miscellaneous">
    <text>Bacitracin is thought to be involved in the inhibition of peptidoglycan synthesis by sequestering undecaprenyl diphosphate, thereby reducing the pool of lipid carrier available.</text>
</comment>
<comment type="similarity">
    <text evidence="1">Belongs to the UppP family.</text>
</comment>
<proteinExistence type="inferred from homology"/>
<gene>
    <name evidence="1" type="primary">uppP2</name>
    <name type="ordered locus">BURPS1106A_3092</name>
</gene>
<keyword id="KW-0046">Antibiotic resistance</keyword>
<keyword id="KW-0997">Cell inner membrane</keyword>
<keyword id="KW-1003">Cell membrane</keyword>
<keyword id="KW-0133">Cell shape</keyword>
<keyword id="KW-0961">Cell wall biogenesis/degradation</keyword>
<keyword id="KW-0378">Hydrolase</keyword>
<keyword id="KW-0472">Membrane</keyword>
<keyword id="KW-0573">Peptidoglycan synthesis</keyword>
<keyword id="KW-0812">Transmembrane</keyword>
<keyword id="KW-1133">Transmembrane helix</keyword>
<dbReference type="EC" id="3.6.1.27" evidence="1"/>
<dbReference type="EMBL" id="CP000572">
    <property type="protein sequence ID" value="ABN90854.1"/>
    <property type="molecule type" value="Genomic_DNA"/>
</dbReference>
<dbReference type="RefSeq" id="WP_004185904.1">
    <property type="nucleotide sequence ID" value="NC_009076.1"/>
</dbReference>
<dbReference type="SMR" id="A3NYA9"/>
<dbReference type="KEGG" id="bpl:BURPS1106A_3092"/>
<dbReference type="HOGENOM" id="CLU_060296_2_0_4"/>
<dbReference type="Proteomes" id="UP000006738">
    <property type="component" value="Chromosome I"/>
</dbReference>
<dbReference type="GO" id="GO:0005886">
    <property type="term" value="C:plasma membrane"/>
    <property type="evidence" value="ECO:0007669"/>
    <property type="project" value="UniProtKB-SubCell"/>
</dbReference>
<dbReference type="GO" id="GO:0050380">
    <property type="term" value="F:undecaprenyl-diphosphatase activity"/>
    <property type="evidence" value="ECO:0007669"/>
    <property type="project" value="UniProtKB-UniRule"/>
</dbReference>
<dbReference type="GO" id="GO:0071555">
    <property type="term" value="P:cell wall organization"/>
    <property type="evidence" value="ECO:0007669"/>
    <property type="project" value="UniProtKB-KW"/>
</dbReference>
<dbReference type="GO" id="GO:0009252">
    <property type="term" value="P:peptidoglycan biosynthetic process"/>
    <property type="evidence" value="ECO:0007669"/>
    <property type="project" value="UniProtKB-KW"/>
</dbReference>
<dbReference type="GO" id="GO:0008360">
    <property type="term" value="P:regulation of cell shape"/>
    <property type="evidence" value="ECO:0007669"/>
    <property type="project" value="UniProtKB-KW"/>
</dbReference>
<dbReference type="GO" id="GO:0046677">
    <property type="term" value="P:response to antibiotic"/>
    <property type="evidence" value="ECO:0007669"/>
    <property type="project" value="UniProtKB-UniRule"/>
</dbReference>
<dbReference type="HAMAP" id="MF_01006">
    <property type="entry name" value="Undec_diphosphatase"/>
    <property type="match status" value="1"/>
</dbReference>
<dbReference type="InterPro" id="IPR003824">
    <property type="entry name" value="UppP"/>
</dbReference>
<dbReference type="NCBIfam" id="NF001389">
    <property type="entry name" value="PRK00281.1-2"/>
    <property type="match status" value="1"/>
</dbReference>
<dbReference type="NCBIfam" id="NF001390">
    <property type="entry name" value="PRK00281.1-4"/>
    <property type="match status" value="1"/>
</dbReference>
<dbReference type="NCBIfam" id="TIGR00753">
    <property type="entry name" value="undec_PP_bacA"/>
    <property type="match status" value="1"/>
</dbReference>
<dbReference type="PANTHER" id="PTHR30622">
    <property type="entry name" value="UNDECAPRENYL-DIPHOSPHATASE"/>
    <property type="match status" value="1"/>
</dbReference>
<dbReference type="PANTHER" id="PTHR30622:SF3">
    <property type="entry name" value="UNDECAPRENYL-DIPHOSPHATASE"/>
    <property type="match status" value="1"/>
</dbReference>
<dbReference type="Pfam" id="PF02673">
    <property type="entry name" value="BacA"/>
    <property type="match status" value="1"/>
</dbReference>
<reference key="1">
    <citation type="journal article" date="2010" name="Genome Biol. Evol.">
        <title>Continuing evolution of Burkholderia mallei through genome reduction and large-scale rearrangements.</title>
        <authorList>
            <person name="Losada L."/>
            <person name="Ronning C.M."/>
            <person name="DeShazer D."/>
            <person name="Woods D."/>
            <person name="Fedorova N."/>
            <person name="Kim H.S."/>
            <person name="Shabalina S.A."/>
            <person name="Pearson T.R."/>
            <person name="Brinkac L."/>
            <person name="Tan P."/>
            <person name="Nandi T."/>
            <person name="Crabtree J."/>
            <person name="Badger J."/>
            <person name="Beckstrom-Sternberg S."/>
            <person name="Saqib M."/>
            <person name="Schutzer S.E."/>
            <person name="Keim P."/>
            <person name="Nierman W.C."/>
        </authorList>
    </citation>
    <scope>NUCLEOTIDE SEQUENCE [LARGE SCALE GENOMIC DNA]</scope>
    <source>
        <strain>1106a</strain>
    </source>
</reference>
<organism>
    <name type="scientific">Burkholderia pseudomallei (strain 1106a)</name>
    <dbReference type="NCBI Taxonomy" id="357348"/>
    <lineage>
        <taxon>Bacteria</taxon>
        <taxon>Pseudomonadati</taxon>
        <taxon>Pseudomonadota</taxon>
        <taxon>Betaproteobacteria</taxon>
        <taxon>Burkholderiales</taxon>
        <taxon>Burkholderiaceae</taxon>
        <taxon>Burkholderia</taxon>
        <taxon>pseudomallei group</taxon>
    </lineage>
</organism>
<protein>
    <recommendedName>
        <fullName evidence="1">Undecaprenyl-diphosphatase 2</fullName>
        <ecNumber evidence="1">3.6.1.27</ecNumber>
    </recommendedName>
    <alternativeName>
        <fullName evidence="1">Bacitracin resistance protein 2</fullName>
    </alternativeName>
    <alternativeName>
        <fullName evidence="1">Undecaprenyl pyrophosphate phosphatase 2</fullName>
    </alternativeName>
</protein>
<evidence type="ECO:0000255" key="1">
    <source>
        <dbReference type="HAMAP-Rule" id="MF_01006"/>
    </source>
</evidence>